<feature type="chain" id="PRO_1000141221" description="Small ribosomal subunit protein uS13">
    <location>
        <begin position="1"/>
        <end position="122"/>
    </location>
</feature>
<feature type="region of interest" description="Disordered" evidence="2">
    <location>
        <begin position="95"/>
        <end position="122"/>
    </location>
</feature>
<sequence>MARIAGVNIPTNKRVIIALQYIHGIGPKKAEEICEKVSIPPERRVVDLTDAEVLQIRETIDRDYIVEGDLRREVAINIKRLMDLGCYRGLRHRRQLPVRGQRTHTNARTRKGKAKPIAGKKK</sequence>
<proteinExistence type="inferred from homology"/>
<protein>
    <recommendedName>
        <fullName evidence="1">Small ribosomal subunit protein uS13</fullName>
    </recommendedName>
    <alternativeName>
        <fullName evidence="3">30S ribosomal protein S13</fullName>
    </alternativeName>
</protein>
<keyword id="KW-1185">Reference proteome</keyword>
<keyword id="KW-0687">Ribonucleoprotein</keyword>
<keyword id="KW-0689">Ribosomal protein</keyword>
<keyword id="KW-0694">RNA-binding</keyword>
<keyword id="KW-0699">rRNA-binding</keyword>
<keyword id="KW-0820">tRNA-binding</keyword>
<name>RS13_BEII9</name>
<organism>
    <name type="scientific">Beijerinckia indica subsp. indica (strain ATCC 9039 / DSM 1715 / NCIMB 8712)</name>
    <dbReference type="NCBI Taxonomy" id="395963"/>
    <lineage>
        <taxon>Bacteria</taxon>
        <taxon>Pseudomonadati</taxon>
        <taxon>Pseudomonadota</taxon>
        <taxon>Alphaproteobacteria</taxon>
        <taxon>Hyphomicrobiales</taxon>
        <taxon>Beijerinckiaceae</taxon>
        <taxon>Beijerinckia</taxon>
    </lineage>
</organism>
<reference key="1">
    <citation type="journal article" date="2010" name="J. Bacteriol.">
        <title>Complete genome sequence of Beijerinckia indica subsp. indica.</title>
        <authorList>
            <person name="Tamas I."/>
            <person name="Dedysh S.N."/>
            <person name="Liesack W."/>
            <person name="Stott M.B."/>
            <person name="Alam M."/>
            <person name="Murrell J.C."/>
            <person name="Dunfield P.F."/>
        </authorList>
    </citation>
    <scope>NUCLEOTIDE SEQUENCE [LARGE SCALE GENOMIC DNA]</scope>
    <source>
        <strain>ATCC 9039 / DSM 1715 / NCIMB 8712</strain>
    </source>
</reference>
<accession>B2IF93</accession>
<comment type="function">
    <text evidence="1">Located at the top of the head of the 30S subunit, it contacts several helices of the 16S rRNA. In the 70S ribosome it contacts the 23S rRNA (bridge B1a) and protein L5 of the 50S subunit (bridge B1b), connecting the 2 subunits; these bridges are implicated in subunit movement. Contacts the tRNAs in the A and P-sites.</text>
</comment>
<comment type="subunit">
    <text evidence="1">Part of the 30S ribosomal subunit. Forms a loose heterodimer with protein S19. Forms two bridges to the 50S subunit in the 70S ribosome.</text>
</comment>
<comment type="similarity">
    <text evidence="1">Belongs to the universal ribosomal protein uS13 family.</text>
</comment>
<gene>
    <name evidence="1" type="primary">rpsM</name>
    <name type="ordered locus">Bind_2036</name>
</gene>
<evidence type="ECO:0000255" key="1">
    <source>
        <dbReference type="HAMAP-Rule" id="MF_01315"/>
    </source>
</evidence>
<evidence type="ECO:0000256" key="2">
    <source>
        <dbReference type="SAM" id="MobiDB-lite"/>
    </source>
</evidence>
<evidence type="ECO:0000305" key="3"/>
<dbReference type="EMBL" id="CP001016">
    <property type="protein sequence ID" value="ACB95658.1"/>
    <property type="molecule type" value="Genomic_DNA"/>
</dbReference>
<dbReference type="RefSeq" id="WP_012385014.1">
    <property type="nucleotide sequence ID" value="NC_010581.1"/>
</dbReference>
<dbReference type="SMR" id="B2IF93"/>
<dbReference type="STRING" id="395963.Bind_2036"/>
<dbReference type="KEGG" id="bid:Bind_2036"/>
<dbReference type="eggNOG" id="COG0099">
    <property type="taxonomic scope" value="Bacteria"/>
</dbReference>
<dbReference type="HOGENOM" id="CLU_103849_1_2_5"/>
<dbReference type="OrthoDB" id="9803610at2"/>
<dbReference type="Proteomes" id="UP000001695">
    <property type="component" value="Chromosome"/>
</dbReference>
<dbReference type="GO" id="GO:0005829">
    <property type="term" value="C:cytosol"/>
    <property type="evidence" value="ECO:0007669"/>
    <property type="project" value="TreeGrafter"/>
</dbReference>
<dbReference type="GO" id="GO:0015935">
    <property type="term" value="C:small ribosomal subunit"/>
    <property type="evidence" value="ECO:0007669"/>
    <property type="project" value="TreeGrafter"/>
</dbReference>
<dbReference type="GO" id="GO:0019843">
    <property type="term" value="F:rRNA binding"/>
    <property type="evidence" value="ECO:0007669"/>
    <property type="project" value="UniProtKB-UniRule"/>
</dbReference>
<dbReference type="GO" id="GO:0003735">
    <property type="term" value="F:structural constituent of ribosome"/>
    <property type="evidence" value="ECO:0007669"/>
    <property type="project" value="InterPro"/>
</dbReference>
<dbReference type="GO" id="GO:0000049">
    <property type="term" value="F:tRNA binding"/>
    <property type="evidence" value="ECO:0007669"/>
    <property type="project" value="UniProtKB-UniRule"/>
</dbReference>
<dbReference type="GO" id="GO:0006412">
    <property type="term" value="P:translation"/>
    <property type="evidence" value="ECO:0007669"/>
    <property type="project" value="UniProtKB-UniRule"/>
</dbReference>
<dbReference type="FunFam" id="1.10.8.50:FF:000001">
    <property type="entry name" value="30S ribosomal protein S13"/>
    <property type="match status" value="1"/>
</dbReference>
<dbReference type="FunFam" id="4.10.910.10:FF:000001">
    <property type="entry name" value="30S ribosomal protein S13"/>
    <property type="match status" value="1"/>
</dbReference>
<dbReference type="Gene3D" id="1.10.8.50">
    <property type="match status" value="1"/>
</dbReference>
<dbReference type="Gene3D" id="4.10.910.10">
    <property type="entry name" value="30s ribosomal protein s13, domain 2"/>
    <property type="match status" value="1"/>
</dbReference>
<dbReference type="HAMAP" id="MF_01315">
    <property type="entry name" value="Ribosomal_uS13"/>
    <property type="match status" value="1"/>
</dbReference>
<dbReference type="InterPro" id="IPR027437">
    <property type="entry name" value="Rbsml_uS13_C"/>
</dbReference>
<dbReference type="InterPro" id="IPR001892">
    <property type="entry name" value="Ribosomal_uS13"/>
</dbReference>
<dbReference type="InterPro" id="IPR010979">
    <property type="entry name" value="Ribosomal_uS13-like_H2TH"/>
</dbReference>
<dbReference type="InterPro" id="IPR019980">
    <property type="entry name" value="Ribosomal_uS13_bac-type"/>
</dbReference>
<dbReference type="NCBIfam" id="TIGR03631">
    <property type="entry name" value="uS13_bact"/>
    <property type="match status" value="1"/>
</dbReference>
<dbReference type="PANTHER" id="PTHR10871">
    <property type="entry name" value="30S RIBOSOMAL PROTEIN S13/40S RIBOSOMAL PROTEIN S18"/>
    <property type="match status" value="1"/>
</dbReference>
<dbReference type="PANTHER" id="PTHR10871:SF1">
    <property type="entry name" value="SMALL RIBOSOMAL SUBUNIT PROTEIN US13M"/>
    <property type="match status" value="1"/>
</dbReference>
<dbReference type="Pfam" id="PF00416">
    <property type="entry name" value="Ribosomal_S13"/>
    <property type="match status" value="1"/>
</dbReference>
<dbReference type="PIRSF" id="PIRSF002134">
    <property type="entry name" value="Ribosomal_S13"/>
    <property type="match status" value="1"/>
</dbReference>
<dbReference type="SUPFAM" id="SSF46946">
    <property type="entry name" value="S13-like H2TH domain"/>
    <property type="match status" value="1"/>
</dbReference>
<dbReference type="PROSITE" id="PS50159">
    <property type="entry name" value="RIBOSOMAL_S13_2"/>
    <property type="match status" value="1"/>
</dbReference>